<accession>P9WJD9</accession>
<accession>L0TH12</accession>
<accession>Q933K8</accession>
<organism>
    <name type="scientific">Mycobacterium tuberculosis (strain ATCC 25618 / H37Rv)</name>
    <dbReference type="NCBI Taxonomy" id="83332"/>
    <lineage>
        <taxon>Bacteria</taxon>
        <taxon>Bacillati</taxon>
        <taxon>Actinomycetota</taxon>
        <taxon>Actinomycetes</taxon>
        <taxon>Mycobacteriales</taxon>
        <taxon>Mycobacteriaceae</taxon>
        <taxon>Mycobacterium</taxon>
        <taxon>Mycobacterium tuberculosis complex</taxon>
    </lineage>
</organism>
<keyword id="KW-0002">3D-structure</keyword>
<keyword id="KW-0007">Acetylation</keyword>
<keyword id="KW-0903">Direct protein sequencing</keyword>
<keyword id="KW-1185">Reference proteome</keyword>
<keyword id="KW-0964">Secreted</keyword>
<keyword id="KW-0843">Virulence</keyword>
<evidence type="ECO:0000256" key="1">
    <source>
        <dbReference type="SAM" id="MobiDB-lite"/>
    </source>
</evidence>
<evidence type="ECO:0000269" key="2">
    <source>
    </source>
</evidence>
<evidence type="ECO:0000269" key="3">
    <source>
    </source>
</evidence>
<evidence type="ECO:0000269" key="4">
    <source>
    </source>
</evidence>
<evidence type="ECO:0000269" key="5">
    <source>
    </source>
</evidence>
<evidence type="ECO:0000269" key="6">
    <source>
    </source>
</evidence>
<evidence type="ECO:0000269" key="7">
    <source>
    </source>
</evidence>
<evidence type="ECO:0000269" key="8">
    <source>
    </source>
</evidence>
<evidence type="ECO:0000269" key="9">
    <source>
    </source>
</evidence>
<evidence type="ECO:0000269" key="10">
    <source>
    </source>
</evidence>
<evidence type="ECO:0000303" key="11">
    <source>
    </source>
</evidence>
<evidence type="ECO:0000303" key="12">
    <source>
    </source>
</evidence>
<evidence type="ECO:0000305" key="13"/>
<evidence type="ECO:0007744" key="14">
    <source>
        <dbReference type="PDB" id="3J83"/>
    </source>
</evidence>
<evidence type="ECO:0007744" key="15">
    <source>
        <dbReference type="PDB" id="4XWP"/>
    </source>
</evidence>
<evidence type="ECO:0007744" key="16">
    <source>
        <dbReference type="PDB" id="4XXN"/>
    </source>
</evidence>
<evidence type="ECO:0007744" key="17">
    <source>
        <dbReference type="PDB" id="4XXX"/>
    </source>
</evidence>
<evidence type="ECO:0007744" key="18">
    <source>
        <dbReference type="PDB" id="4XY3"/>
    </source>
</evidence>
<evidence type="ECO:0007744" key="19">
    <source>
    </source>
</evidence>
<evidence type="ECO:0007829" key="20">
    <source>
        <dbReference type="PDB" id="4XXX"/>
    </source>
</evidence>
<evidence type="ECO:0007829" key="21">
    <source>
        <dbReference type="PDB" id="4XY3"/>
    </source>
</evidence>
<evidence type="ECO:0007829" key="22">
    <source>
        <dbReference type="PDB" id="7P13"/>
    </source>
</evidence>
<comment type="function">
    <text evidence="6 9">Required for host-cell death and may support an EsxA-independent virulence function (PubMed:23869560). Secreted processed form of EspB binds to phosphatidic acid and phosphatidylserine (PubMed:23869560). Inhibits IFN-gamma-induced autophagy in murine macrophages (PubMed:25641595).</text>
</comment>
<comment type="subunit">
    <text evidence="3 10">Mature EspB oligomerizes and forms donut-shaped rings. In contrast, the full-length protein does not oligomerize (PubMed:26051906). Interacts with the C-terminal region of EspK (PubMed:17676952).</text>
</comment>
<comment type="interaction">
    <interactant intactId="EBI-16143320">
        <id>P9WJD9</id>
    </interactant>
    <interactant intactId="EBI-16143320">
        <id>P9WJD9</id>
        <label>espB</label>
    </interactant>
    <organismsDiffer>false</organismsDiffer>
    <experiments>7</experiments>
</comment>
<comment type="subcellular location">
    <subcellularLocation>
        <location evidence="3 6">Secreted</location>
    </subcellularLocation>
    <text evidence="3 6">Secreted via the ESX-1 / type VII secretion system (T7SS) (PubMed:17676952). Secretion requires both EspK and EccCb1, but not EspA, EspC and EspD (PubMed:17676952, PubMed:23869560).</text>
</comment>
<comment type="domain">
    <text evidence="10">The N-terminal region contains a fused PE/PPE homology domain. The C-terminal region is disordered.</text>
</comment>
<comment type="PTM">
    <text evidence="3 4 5 7">Cleaved in the C-terminal region by MycP1 (PubMed:17676952, PubMed:20227664, PubMed:23620593, PubMed:24113528). The exact location of the cleavage sites has been the subject of conflicting reports (PubMed:20227664, PubMed:23620593). Further in vitro studies confirmed that Ala-358 is the primary cleavage site and Ala-386 is a secondary cleavage site (PubMed:24113528). Likely translocated as a full-length protein into the periplasm, where it is proteolyzed by MycP1 (PubMed:17676952, PubMed:20227664). Proteolysis may serve to limit the secretion of other ESX-1 substrates (PubMed:20227664).</text>
</comment>
<comment type="miscellaneous">
    <text evidence="8">BTP15, an inhibitor of ESX-1 secretion, decreases secretion of this protein without being bacteriocidal. BTP15 inhibits autophosphorylation of MprB with subsequent up-regulation of espA and decreased secretion of EspB and EsxA (PubMed:25299337).</text>
</comment>
<comment type="similarity">
    <text evidence="13">Belongs to the EspB family.</text>
</comment>
<feature type="initiator methionine" description="Removed" evidence="2 19">
    <location>
        <position position="1"/>
    </location>
</feature>
<feature type="chain" id="PRO_0000096612" description="ESX-1 secretion-associated protein EspB">
    <location>
        <begin position="2"/>
        <end position="460"/>
    </location>
</feature>
<feature type="region of interest" description="Disordered" evidence="1">
    <location>
        <begin position="92"/>
        <end position="116"/>
    </location>
</feature>
<feature type="region of interest" description="Disordered" evidence="1">
    <location>
        <begin position="303"/>
        <end position="335"/>
    </location>
</feature>
<feature type="region of interest" description="Disordered" evidence="1">
    <location>
        <begin position="405"/>
        <end position="441"/>
    </location>
</feature>
<feature type="site" description="Cleavage; by MycP1" evidence="5 7">
    <location>
        <begin position="358"/>
        <end position="359"/>
    </location>
</feature>
<feature type="site" description="Cleavage; by MycP1" evidence="5 7">
    <location>
        <begin position="386"/>
        <end position="387"/>
    </location>
</feature>
<feature type="modified residue" description="N-acetylthreonine" evidence="19">
    <location>
        <position position="2"/>
    </location>
</feature>
<feature type="helix" evidence="20">
    <location>
        <begin position="11"/>
        <end position="21"/>
    </location>
</feature>
<feature type="strand" evidence="20">
    <location>
        <begin position="36"/>
        <end position="39"/>
    </location>
</feature>
<feature type="helix" evidence="20">
    <location>
        <begin position="40"/>
        <end position="88"/>
    </location>
</feature>
<feature type="strand" evidence="22">
    <location>
        <begin position="124"/>
        <end position="127"/>
    </location>
</feature>
<feature type="helix" evidence="20">
    <location>
        <begin position="133"/>
        <end position="141"/>
    </location>
</feature>
<feature type="helix" evidence="20">
    <location>
        <begin position="147"/>
        <end position="164"/>
    </location>
</feature>
<feature type="helix" evidence="20">
    <location>
        <begin position="168"/>
        <end position="170"/>
    </location>
</feature>
<feature type="strand" evidence="21">
    <location>
        <begin position="174"/>
        <end position="176"/>
    </location>
</feature>
<feature type="helix" evidence="20">
    <location>
        <begin position="179"/>
        <end position="222"/>
    </location>
</feature>
<feature type="helix" evidence="20">
    <location>
        <begin position="226"/>
        <end position="238"/>
    </location>
</feature>
<feature type="helix" evidence="20">
    <location>
        <begin position="240"/>
        <end position="242"/>
    </location>
</feature>
<feature type="helix" evidence="20">
    <location>
        <begin position="243"/>
        <end position="267"/>
    </location>
</feature>
<dbReference type="EMBL" id="AY029285">
    <property type="protein sequence ID" value="AAK31576.1"/>
    <property type="molecule type" value="Genomic_DNA"/>
</dbReference>
<dbReference type="EMBL" id="AL123456">
    <property type="protein sequence ID" value="CCP46710.1"/>
    <property type="molecule type" value="Genomic_DNA"/>
</dbReference>
<dbReference type="PIR" id="G70803">
    <property type="entry name" value="G70803"/>
</dbReference>
<dbReference type="RefSeq" id="NP_218398.1">
    <property type="nucleotide sequence ID" value="NC_000962.3"/>
</dbReference>
<dbReference type="RefSeq" id="WP_003399995.1">
    <property type="nucleotide sequence ID" value="NZ_KK339374.1"/>
</dbReference>
<dbReference type="PDB" id="3J83">
    <property type="method" value="EM"/>
    <property type="resolution" value="30.00 A"/>
    <property type="chains" value="A/B/C/D/E/F/G=1-348"/>
</dbReference>
<dbReference type="PDB" id="4XWP">
    <property type="method" value="X-ray"/>
    <property type="resolution" value="1.82 A"/>
    <property type="chains" value="A=7-278"/>
</dbReference>
<dbReference type="PDB" id="4XXN">
    <property type="method" value="X-ray"/>
    <property type="resolution" value="2.14 A"/>
    <property type="chains" value="A=7-278"/>
</dbReference>
<dbReference type="PDB" id="4XXX">
    <property type="method" value="X-ray"/>
    <property type="resolution" value="1.50 A"/>
    <property type="chains" value="A=7-278"/>
</dbReference>
<dbReference type="PDB" id="4XY3">
    <property type="method" value="X-ray"/>
    <property type="resolution" value="3.04 A"/>
    <property type="chains" value="A=1-460"/>
</dbReference>
<dbReference type="PDB" id="6XZC">
    <property type="method" value="EM"/>
    <property type="resolution" value="3.37 A"/>
    <property type="chains" value="A/B/C/D/E/F/G=1-460"/>
</dbReference>
<dbReference type="PDB" id="7P13">
    <property type="method" value="EM"/>
    <property type="resolution" value="2.29 A"/>
    <property type="chains" value="A/B/C/D/E/F/G=2-287"/>
</dbReference>
<dbReference type="PDB" id="8AKO">
    <property type="method" value="X-ray"/>
    <property type="resolution" value="2.29 A"/>
    <property type="chains" value="A=1-300"/>
</dbReference>
<dbReference type="PDBsum" id="3J83"/>
<dbReference type="PDBsum" id="4XWP"/>
<dbReference type="PDBsum" id="4XXN"/>
<dbReference type="PDBsum" id="4XXX"/>
<dbReference type="PDBsum" id="4XY3"/>
<dbReference type="PDBsum" id="6XZC"/>
<dbReference type="PDBsum" id="7P13"/>
<dbReference type="PDBsum" id="8AKO"/>
<dbReference type="EMDB" id="EMD-10658"/>
<dbReference type="EMDB" id="EMD-13154"/>
<dbReference type="SASBDB" id="P9WJD9"/>
<dbReference type="SMR" id="P9WJD9"/>
<dbReference type="STRING" id="83332.Rv3881c"/>
<dbReference type="iPTMnet" id="P9WJD9"/>
<dbReference type="PaxDb" id="83332-Rv3881c"/>
<dbReference type="DNASU" id="886214"/>
<dbReference type="GeneID" id="45427884"/>
<dbReference type="GeneID" id="886214"/>
<dbReference type="KEGG" id="mtu:Rv3881c"/>
<dbReference type="KEGG" id="mtv:RVBD_3881c"/>
<dbReference type="TubercuList" id="Rv3881c"/>
<dbReference type="eggNOG" id="ENOG50341Q7">
    <property type="taxonomic scope" value="Bacteria"/>
</dbReference>
<dbReference type="InParanoid" id="P9WJD9"/>
<dbReference type="OrthoDB" id="4753912at2"/>
<dbReference type="EvolutionaryTrace" id="P9WJD9"/>
<dbReference type="Proteomes" id="UP000001584">
    <property type="component" value="Chromosome"/>
</dbReference>
<dbReference type="GO" id="GO:0005576">
    <property type="term" value="C:extracellular region"/>
    <property type="evidence" value="ECO:0000314"/>
    <property type="project" value="MTBBASE"/>
</dbReference>
<dbReference type="GO" id="GO:0042802">
    <property type="term" value="F:identical protein binding"/>
    <property type="evidence" value="ECO:0000353"/>
    <property type="project" value="IntAct"/>
</dbReference>
<dbReference type="GO" id="GO:0051701">
    <property type="term" value="P:biological process involved in interaction with host"/>
    <property type="evidence" value="ECO:0000315"/>
    <property type="project" value="MTBBASE"/>
</dbReference>
<dbReference type="GO" id="GO:0044315">
    <property type="term" value="P:protein secretion by the type VII secretion system"/>
    <property type="evidence" value="ECO:0000315"/>
    <property type="project" value="MTBBASE"/>
</dbReference>
<dbReference type="GO" id="GO:0140321">
    <property type="term" value="P:symbiont-mediated suppression of host autophagy"/>
    <property type="evidence" value="ECO:0000269"/>
    <property type="project" value="SigSci"/>
</dbReference>
<dbReference type="FunFam" id="1.20.1260.20:FF:000002">
    <property type="entry name" value="Hypothetical alanine and glycine rich protein"/>
    <property type="match status" value="1"/>
</dbReference>
<dbReference type="Gene3D" id="1.20.1260.20">
    <property type="entry name" value="PPE superfamily"/>
    <property type="match status" value="1"/>
</dbReference>
<dbReference type="InterPro" id="IPR041275">
    <property type="entry name" value="EspB_PE"/>
</dbReference>
<dbReference type="InterPro" id="IPR054056">
    <property type="entry name" value="EspB_PPE"/>
</dbReference>
<dbReference type="InterPro" id="IPR038332">
    <property type="entry name" value="PPE_sf"/>
</dbReference>
<dbReference type="Pfam" id="PF18625">
    <property type="entry name" value="EspB_PE"/>
    <property type="match status" value="1"/>
</dbReference>
<dbReference type="Pfam" id="PF21856">
    <property type="entry name" value="EspB_PPE"/>
    <property type="match status" value="1"/>
</dbReference>
<dbReference type="SUPFAM" id="SSF140459">
    <property type="entry name" value="PE/PPE dimer-like"/>
    <property type="match status" value="1"/>
</dbReference>
<reference key="1">
    <citation type="journal article" date="2001" name="J. Clin. Microbiol.">
        <title>Serological expression cloning and immunological evaluation of MTB48, a novel Mycobacterium tuberculosis antigen.</title>
        <authorList>
            <person name="Lodes M.J."/>
            <person name="Dillon D.C."/>
            <person name="Mohamath R."/>
            <person name="Day C.H."/>
            <person name="Benson D.R."/>
            <person name="Reynolds L.D."/>
            <person name="McNeill P."/>
            <person name="Sampaio D.P."/>
            <person name="Skeiky Y.A.W."/>
            <person name="Badaro R."/>
            <person name="Persing D.H."/>
            <person name="Reed S.G."/>
            <person name="Houghton R.L."/>
        </authorList>
    </citation>
    <scope>NUCLEOTIDE SEQUENCE [GENOMIC DNA]</scope>
    <source>
        <strain>ATCC 35801 / TMC 107 / Erdman</strain>
    </source>
</reference>
<reference key="2">
    <citation type="journal article" date="1998" name="Nature">
        <title>Deciphering the biology of Mycobacterium tuberculosis from the complete genome sequence.</title>
        <authorList>
            <person name="Cole S.T."/>
            <person name="Brosch R."/>
            <person name="Parkhill J."/>
            <person name="Garnier T."/>
            <person name="Churcher C.M."/>
            <person name="Harris D.E."/>
            <person name="Gordon S.V."/>
            <person name="Eiglmeier K."/>
            <person name="Gas S."/>
            <person name="Barry C.E. III"/>
            <person name="Tekaia F."/>
            <person name="Badcock K."/>
            <person name="Basham D."/>
            <person name="Brown D."/>
            <person name="Chillingworth T."/>
            <person name="Connor R."/>
            <person name="Davies R.M."/>
            <person name="Devlin K."/>
            <person name="Feltwell T."/>
            <person name="Gentles S."/>
            <person name="Hamlin N."/>
            <person name="Holroyd S."/>
            <person name="Hornsby T."/>
            <person name="Jagels K."/>
            <person name="Krogh A."/>
            <person name="McLean J."/>
            <person name="Moule S."/>
            <person name="Murphy L.D."/>
            <person name="Oliver S."/>
            <person name="Osborne J."/>
            <person name="Quail M.A."/>
            <person name="Rajandream M.A."/>
            <person name="Rogers J."/>
            <person name="Rutter S."/>
            <person name="Seeger K."/>
            <person name="Skelton S."/>
            <person name="Squares S."/>
            <person name="Squares R."/>
            <person name="Sulston J.E."/>
            <person name="Taylor K."/>
            <person name="Whitehead S."/>
            <person name="Barrell B.G."/>
        </authorList>
    </citation>
    <scope>NUCLEOTIDE SEQUENCE [LARGE SCALE GENOMIC DNA]</scope>
    <source>
        <strain>ATCC 25618 / H37Rv</strain>
    </source>
</reference>
<reference key="3">
    <citation type="journal article" date="2003" name="FEMS Microbiol. Lett.">
        <title>The regulatory elements of the Mycobacterium tuberculosis gene Rv3881c function efficiently in Escherichia coli.</title>
        <authorList>
            <person name="Satchidanandam V."/>
            <person name="Amara R.R."/>
            <person name="Uchil P.D."/>
            <person name="Singh V."/>
        </authorList>
    </citation>
    <scope>PROTEIN SEQUENCE OF 2-10</scope>
    <source>
        <strain>NTI-83949</strain>
    </source>
</reference>
<reference key="4">
    <citation type="journal article" date="2007" name="PLoS Pathog.">
        <title>A mycobacterium ESX-1-secreted virulence factor with unique requirements for export.</title>
        <authorList>
            <person name="McLaughlin B."/>
            <person name="Chon J.S."/>
            <person name="MacGurn J.A."/>
            <person name="Carlsson F."/>
            <person name="Cheng T.L."/>
            <person name="Cox J.S."/>
            <person name="Brown E.J."/>
        </authorList>
    </citation>
    <scope>INTERACTION WITH ESPK</scope>
    <scope>SUBCELLULAR LOCATION</scope>
    <scope>CLEAVAGE</scope>
    <scope>GENE NAME</scope>
</reference>
<reference key="5">
    <citation type="journal article" date="2010" name="Cell Host Microbe">
        <title>Mycobacterium tuberculosis MycP1 protease plays a dual role in regulation of ESX-1 secretion and virulence.</title>
        <authorList>
            <person name="Ohol Y.M."/>
            <person name="Goetz D.H."/>
            <person name="Chan K."/>
            <person name="Shiloh M.U."/>
            <person name="Craik C.S."/>
            <person name="Cox J.S."/>
        </authorList>
    </citation>
    <scope>CLEAVAGE BY MYCP1</scope>
    <source>
        <strain>ATCC 35801 / TMC 107 / Erdman</strain>
    </source>
</reference>
<reference key="6">
    <citation type="journal article" date="2011" name="Mol. Cell. Proteomics">
        <title>Proteogenomic analysis of Mycobacterium tuberculosis by high resolution mass spectrometry.</title>
        <authorList>
            <person name="Kelkar D.S."/>
            <person name="Kumar D."/>
            <person name="Kumar P."/>
            <person name="Balakrishnan L."/>
            <person name="Muthusamy B."/>
            <person name="Yadav A.K."/>
            <person name="Shrivastava P."/>
            <person name="Marimuthu A."/>
            <person name="Anand S."/>
            <person name="Sundaram H."/>
            <person name="Kingsbury R."/>
            <person name="Harsha H.C."/>
            <person name="Nair B."/>
            <person name="Prasad T.S."/>
            <person name="Chauhan D.S."/>
            <person name="Katoch K."/>
            <person name="Katoch V.M."/>
            <person name="Kumar P."/>
            <person name="Chaerkady R."/>
            <person name="Ramachandran S."/>
            <person name="Dash D."/>
            <person name="Pandey A."/>
        </authorList>
    </citation>
    <scope>ACETYLATION [LARGE SCALE ANALYSIS] AT THR-2</scope>
    <scope>CLEAVAGE OF INITIATOR METHIONINE [LARGE SCALE ANALYSIS]</scope>
    <scope>IDENTIFICATION BY MASS SPECTROMETRY [LARGE SCALE ANALYSIS]</scope>
    <source>
        <strain>ATCC 25618 / H37Rv</strain>
    </source>
</reference>
<reference key="7">
    <citation type="journal article" date="2013" name="J. Biol. Chem.">
        <title>Structure of the mycosin-1 protease from the mycobacterial ESX-1 protein type VII secretion system.</title>
        <authorList>
            <person name="Solomonson M."/>
            <person name="Huesgen P.F."/>
            <person name="Wasney G.A."/>
            <person name="Watanabe N."/>
            <person name="Gruninger R.J."/>
            <person name="Prehna G."/>
            <person name="Overall C.M."/>
            <person name="Strynadka N.C."/>
        </authorList>
    </citation>
    <scope>CLEAVAGE BY MYCP1</scope>
</reference>
<reference key="8">
    <citation type="journal article" date="2013" name="J. Struct. Biol.">
        <title>Understanding specificity of the mycosin proteases in ESX/type VII secretion by structural and functional analysis.</title>
        <authorList>
            <person name="Wagner J.M."/>
            <person name="Evans T.J."/>
            <person name="Chen J."/>
            <person name="Zhu H."/>
            <person name="Houben E.N."/>
            <person name="Bitter W."/>
            <person name="Korotkov K.V."/>
        </authorList>
    </citation>
    <scope>CLEAVAGE BY MYCP1</scope>
</reference>
<reference key="9">
    <citation type="journal article" date="2013" name="Mol. Microbiol.">
        <title>Mycobacterium tuberculosis EspB binds phospholipids and mediates EsxA-independent virulence.</title>
        <authorList>
            <person name="Chen J.M."/>
            <person name="Zhang M."/>
            <person name="Rybniker J."/>
            <person name="Boy-Roettger S."/>
            <person name="Dhar N."/>
            <person name="Pojer F."/>
            <person name="Cole S.T."/>
        </authorList>
    </citation>
    <scope>FUNCTION</scope>
    <scope>SUBCELLULAR LOCATION</scope>
</reference>
<reference key="10">
    <citation type="journal article" date="2016" name="J. Microbiol. Immunol. Infect.">
        <title>Mycobacterium tuberculosis EspB protein suppresses interferon-gamma-induced autophagy in murine macrophages.</title>
        <authorList>
            <person name="Huang D."/>
            <person name="Bao L."/>
        </authorList>
    </citation>
    <scope>FUNCTION IN VIRULENCE</scope>
    <source>
        <strain>H37Rv</strain>
    </source>
</reference>
<reference key="11">
    <citation type="journal article" date="2014" name="Cell Host Microbe">
        <title>Anticytolytic screen identifies inhibitors of mycobacterial virulence protein secretion.</title>
        <authorList>
            <person name="Rybniker J."/>
            <person name="Chen J.M."/>
            <person name="Sala C."/>
            <person name="Hartkoorn R.C."/>
            <person name="Vocat A."/>
            <person name="Benjak A."/>
            <person name="Boy-Roettger S."/>
            <person name="Zhang M."/>
            <person name="Szekely R."/>
            <person name="Greff Z."/>
            <person name="Orfi L."/>
            <person name="Szabadkai I."/>
            <person name="Pato J."/>
            <person name="Keri G."/>
            <person name="Cole S.T."/>
        </authorList>
    </citation>
    <scope>SECRETION INHIBITION</scope>
</reference>
<reference evidence="15 16 17 18" key="12">
    <citation type="journal article" date="2015" name="J. Struct. Biol.">
        <title>Structure of EspB, a secreted substrate of the ESX-1 secretion system of Mycobacterium tuberculosis.</title>
        <authorList>
            <person name="Korotkova N."/>
            <person name="Piton J."/>
            <person name="Wagner J.M."/>
            <person name="Boy-Rottger S."/>
            <person name="Japaridze A."/>
            <person name="Evans T.J."/>
            <person name="Cole S.T."/>
            <person name="Pojer F."/>
            <person name="Korotkov K.V."/>
        </authorList>
    </citation>
    <scope>X-RAY CRYSTALLOGRAPHY (1.50 ANGSTROMS) OF 7-278</scope>
    <scope>SUBUNIT</scope>
    <scope>DOMAIN</scope>
    <source>
        <strain>ATCC 35801 / TMC 107 / Erdman</strain>
    </source>
</reference>
<reference evidence="14" key="13">
    <citation type="journal article" date="2015" name="Structure">
        <title>Structure of EspB from the ESX-1 type VII secretion system and insights into its export mechanism.</title>
        <authorList>
            <person name="Solomonson M."/>
            <person name="Setiaputra D."/>
            <person name="Makepeace K.A."/>
            <person name="Lameignere E."/>
            <person name="Petrotchenko E.V."/>
            <person name="Conrady D.G."/>
            <person name="Bergeron J.R."/>
            <person name="Vuckovic M."/>
            <person name="DiMaio F."/>
            <person name="Borchers C.H."/>
            <person name="Yip C.K."/>
            <person name="Strynadka N.C."/>
        </authorList>
    </citation>
    <scope>STRUCTURE BY ELECTRON MICROSCOPY (30.00 ANGSTROMS) OF 1-348</scope>
</reference>
<gene>
    <name evidence="12" type="primary">espB</name>
    <name evidence="11" type="synonym">mtb48</name>
    <name type="ordered locus">Rv3881c</name>
    <name type="ORF">MTV027.16c</name>
</gene>
<sequence length="460" mass="47594">MTQSQTVTVDQQEILNRANEVEAPMADPPTDVPITPCELTAAKNAAQQLVLSADNMREYLAAGAKERQRLATSLRNAAKAYGEVDEEAATALDNDGEGTVQAESAGAVGGDSSAELTDTPRVATAGEPNFMDLKEAARKLETGDQGASLAHFADGWNTFNLTLQGDVKRFRGFDNWEGDAATACEASLDQQRQWILHMAKLSAAMAKQAQYVAQLHVWARREHPTYEDIVGLERLYAENPSARDQILPVYAEYQQRSEKVLTEYNNKAALEPVNPPKPPPAIKIDPPPPPQEQGLIPGFLMPPSDGSGVTPGTGMPAAPMVPPTGSPGGGLPADTAAQLTSAGREAAALSGDVAVKAASLGGGGGGGVPSAPLGSAIGGAESVRPAGAGDIAGLGQGRAGGGAALGGGGMGMPMGAAHQGQGGAKSKGSQQEDEALYTEDRAWTEAVIGNRRRQDSKESK</sequence>
<name>ESPB_MYCTU</name>
<proteinExistence type="evidence at protein level"/>
<protein>
    <recommendedName>
        <fullName evidence="13">ESX-1 secretion-associated protein EspB</fullName>
    </recommendedName>
    <alternativeName>
        <fullName evidence="13">Antigen MTB48</fullName>
    </alternativeName>
</protein>